<organism>
    <name type="scientific">Thermosipho africanus (strain TCF52B)</name>
    <dbReference type="NCBI Taxonomy" id="484019"/>
    <lineage>
        <taxon>Bacteria</taxon>
        <taxon>Thermotogati</taxon>
        <taxon>Thermotogota</taxon>
        <taxon>Thermotogae</taxon>
        <taxon>Thermotogales</taxon>
        <taxon>Fervidobacteriaceae</taxon>
        <taxon>Thermosipho</taxon>
    </lineage>
</organism>
<dbReference type="EC" id="2.7.1.33" evidence="1"/>
<dbReference type="EMBL" id="CP001185">
    <property type="protein sequence ID" value="ACJ75953.1"/>
    <property type="molecule type" value="Genomic_DNA"/>
</dbReference>
<dbReference type="RefSeq" id="WP_004102036.1">
    <property type="nucleotide sequence ID" value="NC_011653.1"/>
</dbReference>
<dbReference type="SMR" id="B7ID76"/>
<dbReference type="STRING" id="484019.THA_1512"/>
<dbReference type="KEGG" id="taf:THA_1512"/>
<dbReference type="eggNOG" id="COG1521">
    <property type="taxonomic scope" value="Bacteria"/>
</dbReference>
<dbReference type="HOGENOM" id="CLU_066627_1_1_0"/>
<dbReference type="OrthoDB" id="9804707at2"/>
<dbReference type="UniPathway" id="UPA00241">
    <property type="reaction ID" value="UER00352"/>
</dbReference>
<dbReference type="Proteomes" id="UP000002453">
    <property type="component" value="Chromosome"/>
</dbReference>
<dbReference type="GO" id="GO:0005737">
    <property type="term" value="C:cytoplasm"/>
    <property type="evidence" value="ECO:0007669"/>
    <property type="project" value="UniProtKB-SubCell"/>
</dbReference>
<dbReference type="GO" id="GO:0005524">
    <property type="term" value="F:ATP binding"/>
    <property type="evidence" value="ECO:0007669"/>
    <property type="project" value="UniProtKB-UniRule"/>
</dbReference>
<dbReference type="GO" id="GO:0046872">
    <property type="term" value="F:metal ion binding"/>
    <property type="evidence" value="ECO:0007669"/>
    <property type="project" value="UniProtKB-KW"/>
</dbReference>
<dbReference type="GO" id="GO:0004594">
    <property type="term" value="F:pantothenate kinase activity"/>
    <property type="evidence" value="ECO:0007669"/>
    <property type="project" value="UniProtKB-UniRule"/>
</dbReference>
<dbReference type="GO" id="GO:0015937">
    <property type="term" value="P:coenzyme A biosynthetic process"/>
    <property type="evidence" value="ECO:0007669"/>
    <property type="project" value="UniProtKB-UniRule"/>
</dbReference>
<dbReference type="CDD" id="cd24015">
    <property type="entry name" value="ASKHA_NBD_PanK-III"/>
    <property type="match status" value="1"/>
</dbReference>
<dbReference type="Gene3D" id="3.30.420.40">
    <property type="match status" value="2"/>
</dbReference>
<dbReference type="HAMAP" id="MF_01274">
    <property type="entry name" value="Pantothen_kinase_3"/>
    <property type="match status" value="1"/>
</dbReference>
<dbReference type="InterPro" id="IPR043129">
    <property type="entry name" value="ATPase_NBD"/>
</dbReference>
<dbReference type="InterPro" id="IPR004619">
    <property type="entry name" value="Type_III_PanK"/>
</dbReference>
<dbReference type="NCBIfam" id="TIGR00671">
    <property type="entry name" value="baf"/>
    <property type="match status" value="1"/>
</dbReference>
<dbReference type="NCBIfam" id="NF009848">
    <property type="entry name" value="PRK13318.1-6"/>
    <property type="match status" value="1"/>
</dbReference>
<dbReference type="PANTHER" id="PTHR34265">
    <property type="entry name" value="TYPE III PANTOTHENATE KINASE"/>
    <property type="match status" value="1"/>
</dbReference>
<dbReference type="PANTHER" id="PTHR34265:SF1">
    <property type="entry name" value="TYPE III PANTOTHENATE KINASE"/>
    <property type="match status" value="1"/>
</dbReference>
<dbReference type="Pfam" id="PF03309">
    <property type="entry name" value="Pan_kinase"/>
    <property type="match status" value="1"/>
</dbReference>
<dbReference type="SUPFAM" id="SSF53067">
    <property type="entry name" value="Actin-like ATPase domain"/>
    <property type="match status" value="2"/>
</dbReference>
<feature type="chain" id="PRO_1000140260" description="Type III pantothenate kinase">
    <location>
        <begin position="1"/>
        <end position="249"/>
    </location>
</feature>
<feature type="active site" description="Proton acceptor" evidence="1">
    <location>
        <position position="103"/>
    </location>
</feature>
<feature type="binding site" evidence="1">
    <location>
        <begin position="6"/>
        <end position="13"/>
    </location>
    <ligand>
        <name>ATP</name>
        <dbReference type="ChEBI" id="CHEBI:30616"/>
    </ligand>
</feature>
<feature type="binding site" evidence="1">
    <location>
        <begin position="101"/>
        <end position="104"/>
    </location>
    <ligand>
        <name>substrate</name>
    </ligand>
</feature>
<feature type="binding site" evidence="1">
    <location>
        <position position="123"/>
    </location>
    <ligand>
        <name>K(+)</name>
        <dbReference type="ChEBI" id="CHEBI:29103"/>
    </ligand>
</feature>
<feature type="binding site" evidence="1">
    <location>
        <position position="126"/>
    </location>
    <ligand>
        <name>ATP</name>
        <dbReference type="ChEBI" id="CHEBI:30616"/>
    </ligand>
</feature>
<feature type="binding site" evidence="1">
    <location>
        <position position="177"/>
    </location>
    <ligand>
        <name>substrate</name>
    </ligand>
</feature>
<evidence type="ECO:0000255" key="1">
    <source>
        <dbReference type="HAMAP-Rule" id="MF_01274"/>
    </source>
</evidence>
<protein>
    <recommendedName>
        <fullName evidence="1">Type III pantothenate kinase</fullName>
        <ecNumber evidence="1">2.7.1.33</ecNumber>
    </recommendedName>
    <alternativeName>
        <fullName evidence="1">PanK-III</fullName>
    </alternativeName>
    <alternativeName>
        <fullName evidence="1">Pantothenic acid kinase</fullName>
    </alternativeName>
</protein>
<sequence>MLLLFDVGNTHTTIALTKDGKSFDIKRVSTHSIQTEDELYVFLKMFYRNDFKDIVVSSVVPNINYIFEFFAEKYLNKKAIFVSAKEYNEIIWNVNTPEEIGADRVVDVIAASRDYGKDAIVVDFGTAITIEVLKENRYEGGVIIPGFNMMVNALFKGTAKLPKVELKPSDTFVGKDTGSNIRIGVINTILGGIDYTIERIKSDYDLKSAPIIYTGGQSKLIREYLKKDIIYDLELGLRGIYYFYENIAC</sequence>
<reference key="1">
    <citation type="journal article" date="2009" name="J. Bacteriol.">
        <title>The genome of Thermosipho africanus TCF52B: lateral genetic connections to the Firmicutes and Archaea.</title>
        <authorList>
            <person name="Nesboe C.L."/>
            <person name="Bapteste E."/>
            <person name="Curtis B."/>
            <person name="Dahle H."/>
            <person name="Lopez P."/>
            <person name="Macleod D."/>
            <person name="Dlutek M."/>
            <person name="Bowman S."/>
            <person name="Zhaxybayeva O."/>
            <person name="Birkeland N.-K."/>
            <person name="Doolittle W.F."/>
        </authorList>
    </citation>
    <scope>NUCLEOTIDE SEQUENCE [LARGE SCALE GENOMIC DNA]</scope>
    <source>
        <strain>TCF52B</strain>
    </source>
</reference>
<gene>
    <name evidence="1" type="primary">coaX</name>
    <name type="ordered locus">THA_1512</name>
</gene>
<comment type="function">
    <text evidence="1">Catalyzes the phosphorylation of pantothenate (Pan), the first step in CoA biosynthesis.</text>
</comment>
<comment type="catalytic activity">
    <reaction evidence="1">
        <text>(R)-pantothenate + ATP = (R)-4'-phosphopantothenate + ADP + H(+)</text>
        <dbReference type="Rhea" id="RHEA:16373"/>
        <dbReference type="ChEBI" id="CHEBI:10986"/>
        <dbReference type="ChEBI" id="CHEBI:15378"/>
        <dbReference type="ChEBI" id="CHEBI:29032"/>
        <dbReference type="ChEBI" id="CHEBI:30616"/>
        <dbReference type="ChEBI" id="CHEBI:456216"/>
        <dbReference type="EC" id="2.7.1.33"/>
    </reaction>
</comment>
<comment type="cofactor">
    <cofactor evidence="1">
        <name>NH4(+)</name>
        <dbReference type="ChEBI" id="CHEBI:28938"/>
    </cofactor>
    <cofactor evidence="1">
        <name>K(+)</name>
        <dbReference type="ChEBI" id="CHEBI:29103"/>
    </cofactor>
    <text evidence="1">A monovalent cation. Ammonium or potassium.</text>
</comment>
<comment type="pathway">
    <text evidence="1">Cofactor biosynthesis; coenzyme A biosynthesis; CoA from (R)-pantothenate: step 1/5.</text>
</comment>
<comment type="subunit">
    <text evidence="1">Homodimer.</text>
</comment>
<comment type="subcellular location">
    <subcellularLocation>
        <location evidence="1">Cytoplasm</location>
    </subcellularLocation>
</comment>
<comment type="similarity">
    <text evidence="1">Belongs to the type III pantothenate kinase family.</text>
</comment>
<proteinExistence type="inferred from homology"/>
<accession>B7ID76</accession>
<keyword id="KW-0067">ATP-binding</keyword>
<keyword id="KW-0173">Coenzyme A biosynthesis</keyword>
<keyword id="KW-0963">Cytoplasm</keyword>
<keyword id="KW-0418">Kinase</keyword>
<keyword id="KW-0479">Metal-binding</keyword>
<keyword id="KW-0547">Nucleotide-binding</keyword>
<keyword id="KW-0630">Potassium</keyword>
<keyword id="KW-1185">Reference proteome</keyword>
<keyword id="KW-0808">Transferase</keyword>
<name>COAX_THEAB</name>